<dbReference type="EC" id="1.3.8.13" evidence="1"/>
<dbReference type="EMBL" id="CP001144">
    <property type="protein sequence ID" value="ACH75061.1"/>
    <property type="molecule type" value="Genomic_DNA"/>
</dbReference>
<dbReference type="RefSeq" id="WP_000347134.1">
    <property type="nucleotide sequence ID" value="NC_011205.1"/>
</dbReference>
<dbReference type="SMR" id="B5FHG7"/>
<dbReference type="GeneID" id="44979088"/>
<dbReference type="KEGG" id="sed:SeD_A0079"/>
<dbReference type="HOGENOM" id="CLU_018204_0_2_6"/>
<dbReference type="UniPathway" id="UPA00117"/>
<dbReference type="Proteomes" id="UP000008322">
    <property type="component" value="Chromosome"/>
</dbReference>
<dbReference type="GO" id="GO:0005737">
    <property type="term" value="C:cytoplasm"/>
    <property type="evidence" value="ECO:0007669"/>
    <property type="project" value="UniProtKB-SubCell"/>
</dbReference>
<dbReference type="GO" id="GO:0003995">
    <property type="term" value="F:acyl-CoA dehydrogenase activity"/>
    <property type="evidence" value="ECO:0007669"/>
    <property type="project" value="InterPro"/>
</dbReference>
<dbReference type="GO" id="GO:0050660">
    <property type="term" value="F:flavin adenine dinucleotide binding"/>
    <property type="evidence" value="ECO:0007669"/>
    <property type="project" value="InterPro"/>
</dbReference>
<dbReference type="GO" id="GO:0009437">
    <property type="term" value="P:carnitine metabolic process"/>
    <property type="evidence" value="ECO:0007669"/>
    <property type="project" value="UniProtKB-UniRule"/>
</dbReference>
<dbReference type="CDD" id="cd00567">
    <property type="entry name" value="ACAD"/>
    <property type="match status" value="1"/>
</dbReference>
<dbReference type="FunFam" id="1.20.140.10:FF:000001">
    <property type="entry name" value="Acyl-CoA dehydrogenase"/>
    <property type="match status" value="1"/>
</dbReference>
<dbReference type="FunFam" id="2.40.110.10:FF:000002">
    <property type="entry name" value="Acyl-CoA dehydrogenase fadE12"/>
    <property type="match status" value="1"/>
</dbReference>
<dbReference type="FunFam" id="1.10.540.10:FF:000005">
    <property type="entry name" value="Crotonobetainyl-CoA reductase"/>
    <property type="match status" value="1"/>
</dbReference>
<dbReference type="Gene3D" id="1.10.540.10">
    <property type="entry name" value="Acyl-CoA dehydrogenase/oxidase, N-terminal domain"/>
    <property type="match status" value="1"/>
</dbReference>
<dbReference type="Gene3D" id="2.40.110.10">
    <property type="entry name" value="Butyryl-CoA Dehydrogenase, subunit A, domain 2"/>
    <property type="match status" value="1"/>
</dbReference>
<dbReference type="Gene3D" id="1.20.140.10">
    <property type="entry name" value="Butyryl-CoA Dehydrogenase, subunit A, domain 3"/>
    <property type="match status" value="1"/>
</dbReference>
<dbReference type="HAMAP" id="MF_01052">
    <property type="entry name" value="CaiA"/>
    <property type="match status" value="1"/>
</dbReference>
<dbReference type="InterPro" id="IPR006089">
    <property type="entry name" value="Acyl-CoA_DH_CS"/>
</dbReference>
<dbReference type="InterPro" id="IPR006091">
    <property type="entry name" value="Acyl-CoA_Oxase/DH_mid-dom"/>
</dbReference>
<dbReference type="InterPro" id="IPR046373">
    <property type="entry name" value="Acyl-CoA_Oxase/DH_mid-dom_sf"/>
</dbReference>
<dbReference type="InterPro" id="IPR036250">
    <property type="entry name" value="AcylCo_DH-like_C"/>
</dbReference>
<dbReference type="InterPro" id="IPR009075">
    <property type="entry name" value="AcylCo_DH/oxidase_C"/>
</dbReference>
<dbReference type="InterPro" id="IPR013786">
    <property type="entry name" value="AcylCoA_DH/ox_N"/>
</dbReference>
<dbReference type="InterPro" id="IPR037069">
    <property type="entry name" value="AcylCoA_DH/ox_N_sf"/>
</dbReference>
<dbReference type="InterPro" id="IPR009100">
    <property type="entry name" value="AcylCoA_DH/oxidase_NM_dom_sf"/>
</dbReference>
<dbReference type="InterPro" id="IPR023450">
    <property type="entry name" value="CaiA"/>
</dbReference>
<dbReference type="NCBIfam" id="NF002885">
    <property type="entry name" value="PRK03354.1"/>
    <property type="match status" value="1"/>
</dbReference>
<dbReference type="PANTHER" id="PTHR43884">
    <property type="entry name" value="ACYL-COA DEHYDROGENASE"/>
    <property type="match status" value="1"/>
</dbReference>
<dbReference type="PANTHER" id="PTHR43884:SF12">
    <property type="entry name" value="ISOVALERYL-COA DEHYDROGENASE, MITOCHONDRIAL-RELATED"/>
    <property type="match status" value="1"/>
</dbReference>
<dbReference type="Pfam" id="PF00441">
    <property type="entry name" value="Acyl-CoA_dh_1"/>
    <property type="match status" value="1"/>
</dbReference>
<dbReference type="Pfam" id="PF02770">
    <property type="entry name" value="Acyl-CoA_dh_M"/>
    <property type="match status" value="1"/>
</dbReference>
<dbReference type="Pfam" id="PF02771">
    <property type="entry name" value="Acyl-CoA_dh_N"/>
    <property type="match status" value="1"/>
</dbReference>
<dbReference type="PIRSF" id="PIRSF016578">
    <property type="entry name" value="HsaA"/>
    <property type="match status" value="1"/>
</dbReference>
<dbReference type="SUPFAM" id="SSF47203">
    <property type="entry name" value="Acyl-CoA dehydrogenase C-terminal domain-like"/>
    <property type="match status" value="1"/>
</dbReference>
<dbReference type="SUPFAM" id="SSF56645">
    <property type="entry name" value="Acyl-CoA dehydrogenase NM domain-like"/>
    <property type="match status" value="1"/>
</dbReference>
<dbReference type="PROSITE" id="PS00072">
    <property type="entry name" value="ACYL_COA_DH_1"/>
    <property type="match status" value="1"/>
</dbReference>
<dbReference type="PROSITE" id="PS00073">
    <property type="entry name" value="ACYL_COA_DH_2"/>
    <property type="match status" value="1"/>
</dbReference>
<evidence type="ECO:0000255" key="1">
    <source>
        <dbReference type="HAMAP-Rule" id="MF_01052"/>
    </source>
</evidence>
<sequence length="380" mass="42481">MDFNLNDEQELFVAGIRELMASENWEAYFAECDRDSVYPERFVKALADMGIDSLLIPEEHGGLEAGFVTVAAVWMELGRLGAPTYVLYQLPGGFNTFLREGTQEQIDKIMAFRGTGKQMWNSAITEPGAGSDVGSLKTTYTRKNGKVYLNGSKCFITSSAYTPYIVVMARDGASPDKPVYTEWFVDMSKAGIKVNKLEKLGLRMDSCCEITFDDVELDEKDMFGREGNGFNRVKEEFDHERFLVALTNYGTAMCAFEDAARYANQRVQFGEAIGRFQLIQEKFAHMAIKLNSMKNMLLEAAWKADNGTITSGDAAMCKYFCANAAFEVVDTAMQVLGGVGIAGNHRITRFWRDLRVDRVSGGSDEMQILTLGRAVLKQYR</sequence>
<organism>
    <name type="scientific">Salmonella dublin (strain CT_02021853)</name>
    <dbReference type="NCBI Taxonomy" id="439851"/>
    <lineage>
        <taxon>Bacteria</taxon>
        <taxon>Pseudomonadati</taxon>
        <taxon>Pseudomonadota</taxon>
        <taxon>Gammaproteobacteria</taxon>
        <taxon>Enterobacterales</taxon>
        <taxon>Enterobacteriaceae</taxon>
        <taxon>Salmonella</taxon>
    </lineage>
</organism>
<gene>
    <name evidence="1" type="primary">caiA</name>
    <name type="ordered locus">SeD_A0079</name>
</gene>
<accession>B5FHG7</accession>
<keyword id="KW-0963">Cytoplasm</keyword>
<keyword id="KW-0274">FAD</keyword>
<keyword id="KW-0285">Flavoprotein</keyword>
<keyword id="KW-0560">Oxidoreductase</keyword>
<feature type="chain" id="PRO_1000136279" description="Crotonobetainyl-CoA reductase">
    <location>
        <begin position="1"/>
        <end position="380"/>
    </location>
</feature>
<proteinExistence type="inferred from homology"/>
<reference key="1">
    <citation type="journal article" date="2011" name="J. Bacteriol.">
        <title>Comparative genomics of 28 Salmonella enterica isolates: evidence for CRISPR-mediated adaptive sublineage evolution.</title>
        <authorList>
            <person name="Fricke W.F."/>
            <person name="Mammel M.K."/>
            <person name="McDermott P.F."/>
            <person name="Tartera C."/>
            <person name="White D.G."/>
            <person name="Leclerc J.E."/>
            <person name="Ravel J."/>
            <person name="Cebula T.A."/>
        </authorList>
    </citation>
    <scope>NUCLEOTIDE SEQUENCE [LARGE SCALE GENOMIC DNA]</scope>
    <source>
        <strain>CT_02021853</strain>
    </source>
</reference>
<protein>
    <recommendedName>
        <fullName evidence="1">Crotonobetainyl-CoA reductase</fullName>
        <ecNumber evidence="1">1.3.8.13</ecNumber>
    </recommendedName>
    <alternativeName>
        <fullName evidence="1">Crotonobetainyl-CoA dehydrogenase</fullName>
    </alternativeName>
</protein>
<comment type="function">
    <text evidence="1">Catalyzes the reduction of crotonobetainyl-CoA to gamma-butyrobetainyl-CoA.</text>
</comment>
<comment type="catalytic activity">
    <reaction evidence="1">
        <text>4-(trimethylamino)butanoyl-CoA + oxidized [electron-transfer flavoprotein] + H(+) = crotonobetainyl-CoA + reduced [electron-transfer flavoprotein]</text>
        <dbReference type="Rhea" id="RHEA:51584"/>
        <dbReference type="Rhea" id="RHEA-COMP:10685"/>
        <dbReference type="Rhea" id="RHEA-COMP:10686"/>
        <dbReference type="ChEBI" id="CHEBI:15378"/>
        <dbReference type="ChEBI" id="CHEBI:57692"/>
        <dbReference type="ChEBI" id="CHEBI:58307"/>
        <dbReference type="ChEBI" id="CHEBI:60933"/>
        <dbReference type="ChEBI" id="CHEBI:61513"/>
        <dbReference type="EC" id="1.3.8.13"/>
    </reaction>
</comment>
<comment type="cofactor">
    <cofactor evidence="1">
        <name>FAD</name>
        <dbReference type="ChEBI" id="CHEBI:57692"/>
    </cofactor>
</comment>
<comment type="pathway">
    <text evidence="1">Amine and polyamine metabolism; carnitine metabolism.</text>
</comment>
<comment type="subunit">
    <text evidence="1">Homotetramer.</text>
</comment>
<comment type="subcellular location">
    <subcellularLocation>
        <location evidence="1">Cytoplasm</location>
    </subcellularLocation>
</comment>
<comment type="similarity">
    <text evidence="1">Belongs to the acyl-CoA dehydrogenase family.</text>
</comment>
<name>CAIA_SALDC</name>